<comment type="function">
    <text evidence="1">Catalyzes the stereoinversion of LL-2,6-diaminopimelate (L,L-DAP) to meso-diaminopimelate (meso-DAP), a precursor of L-lysine and an essential component of the bacterial peptidoglycan.</text>
</comment>
<comment type="catalytic activity">
    <reaction evidence="1">
        <text>(2S,6S)-2,6-diaminopimelate = meso-2,6-diaminopimelate</text>
        <dbReference type="Rhea" id="RHEA:15393"/>
        <dbReference type="ChEBI" id="CHEBI:57609"/>
        <dbReference type="ChEBI" id="CHEBI:57791"/>
        <dbReference type="EC" id="5.1.1.7"/>
    </reaction>
</comment>
<comment type="pathway">
    <text evidence="1">Amino-acid biosynthesis; L-lysine biosynthesis via DAP pathway; DL-2,6-diaminopimelate from LL-2,6-diaminopimelate: step 1/1.</text>
</comment>
<comment type="subunit">
    <text evidence="1">Homodimer.</text>
</comment>
<comment type="subcellular location">
    <subcellularLocation>
        <location evidence="1">Cytoplasm</location>
    </subcellularLocation>
</comment>
<comment type="similarity">
    <text evidence="1">Belongs to the diaminopimelate epimerase family.</text>
</comment>
<keyword id="KW-0028">Amino-acid biosynthesis</keyword>
<keyword id="KW-0963">Cytoplasm</keyword>
<keyword id="KW-0413">Isomerase</keyword>
<keyword id="KW-0457">Lysine biosynthesis</keyword>
<accession>Q48C02</accession>
<feature type="chain" id="PRO_1000011928" description="Diaminopimelate epimerase">
    <location>
        <begin position="1"/>
        <end position="276"/>
    </location>
</feature>
<feature type="active site" description="Proton donor" evidence="1">
    <location>
        <position position="75"/>
    </location>
</feature>
<feature type="active site" description="Proton acceptor" evidence="1">
    <location>
        <position position="219"/>
    </location>
</feature>
<feature type="binding site" evidence="1">
    <location>
        <position position="13"/>
    </location>
    <ligand>
        <name>substrate</name>
    </ligand>
</feature>
<feature type="binding site" evidence="1">
    <location>
        <position position="46"/>
    </location>
    <ligand>
        <name>substrate</name>
    </ligand>
</feature>
<feature type="binding site" evidence="1">
    <location>
        <position position="66"/>
    </location>
    <ligand>
        <name>substrate</name>
    </ligand>
</feature>
<feature type="binding site" evidence="1">
    <location>
        <begin position="76"/>
        <end position="77"/>
    </location>
    <ligand>
        <name>substrate</name>
    </ligand>
</feature>
<feature type="binding site" evidence="1">
    <location>
        <position position="159"/>
    </location>
    <ligand>
        <name>substrate</name>
    </ligand>
</feature>
<feature type="binding site" evidence="1">
    <location>
        <position position="192"/>
    </location>
    <ligand>
        <name>substrate</name>
    </ligand>
</feature>
<feature type="binding site" evidence="1">
    <location>
        <begin position="210"/>
        <end position="211"/>
    </location>
    <ligand>
        <name>substrate</name>
    </ligand>
</feature>
<feature type="binding site" evidence="1">
    <location>
        <begin position="220"/>
        <end position="221"/>
    </location>
    <ligand>
        <name>substrate</name>
    </ligand>
</feature>
<feature type="site" description="Could be important to modulate the pK values of the two catalytic cysteine residues" evidence="1">
    <location>
        <position position="161"/>
    </location>
</feature>
<feature type="site" description="Could be important to modulate the pK values of the two catalytic cysteine residues" evidence="1">
    <location>
        <position position="210"/>
    </location>
</feature>
<feature type="site" description="Important for dimerization" evidence="1">
    <location>
        <position position="270"/>
    </location>
</feature>
<gene>
    <name evidence="1" type="primary">dapF</name>
    <name type="ordered locus">PSPPH_5007</name>
</gene>
<evidence type="ECO:0000255" key="1">
    <source>
        <dbReference type="HAMAP-Rule" id="MF_00197"/>
    </source>
</evidence>
<reference key="1">
    <citation type="journal article" date="2005" name="J. Bacteriol.">
        <title>Whole-genome sequence analysis of Pseudomonas syringae pv. phaseolicola 1448A reveals divergence among pathovars in genes involved in virulence and transposition.</title>
        <authorList>
            <person name="Joardar V."/>
            <person name="Lindeberg M."/>
            <person name="Jackson R.W."/>
            <person name="Selengut J."/>
            <person name="Dodson R."/>
            <person name="Brinkac L.M."/>
            <person name="Daugherty S.C."/>
            <person name="DeBoy R.T."/>
            <person name="Durkin A.S."/>
            <person name="Gwinn Giglio M."/>
            <person name="Madupu R."/>
            <person name="Nelson W.C."/>
            <person name="Rosovitz M.J."/>
            <person name="Sullivan S.A."/>
            <person name="Crabtree J."/>
            <person name="Creasy T."/>
            <person name="Davidsen T.M."/>
            <person name="Haft D.H."/>
            <person name="Zafar N."/>
            <person name="Zhou L."/>
            <person name="Halpin R."/>
            <person name="Holley T."/>
            <person name="Khouri H.M."/>
            <person name="Feldblyum T.V."/>
            <person name="White O."/>
            <person name="Fraser C.M."/>
            <person name="Chatterjee A.K."/>
            <person name="Cartinhour S."/>
            <person name="Schneider D."/>
            <person name="Mansfield J.W."/>
            <person name="Collmer A."/>
            <person name="Buell R."/>
        </authorList>
    </citation>
    <scope>NUCLEOTIDE SEQUENCE [LARGE SCALE GENOMIC DNA]</scope>
    <source>
        <strain>1448A / Race 6</strain>
    </source>
</reference>
<dbReference type="EC" id="5.1.1.7" evidence="1"/>
<dbReference type="EMBL" id="CP000058">
    <property type="protein sequence ID" value="AAZ33043.1"/>
    <property type="molecule type" value="Genomic_DNA"/>
</dbReference>
<dbReference type="RefSeq" id="WP_004659606.1">
    <property type="nucleotide sequence ID" value="NC_005773.3"/>
</dbReference>
<dbReference type="SMR" id="Q48C02"/>
<dbReference type="GeneID" id="61867495"/>
<dbReference type="KEGG" id="psp:PSPPH_5007"/>
<dbReference type="eggNOG" id="COG0253">
    <property type="taxonomic scope" value="Bacteria"/>
</dbReference>
<dbReference type="HOGENOM" id="CLU_053306_1_1_6"/>
<dbReference type="UniPathway" id="UPA00034">
    <property type="reaction ID" value="UER00025"/>
</dbReference>
<dbReference type="Proteomes" id="UP000000551">
    <property type="component" value="Chromosome"/>
</dbReference>
<dbReference type="GO" id="GO:0005829">
    <property type="term" value="C:cytosol"/>
    <property type="evidence" value="ECO:0007669"/>
    <property type="project" value="TreeGrafter"/>
</dbReference>
<dbReference type="GO" id="GO:0008837">
    <property type="term" value="F:diaminopimelate epimerase activity"/>
    <property type="evidence" value="ECO:0007669"/>
    <property type="project" value="UniProtKB-UniRule"/>
</dbReference>
<dbReference type="GO" id="GO:0009089">
    <property type="term" value="P:lysine biosynthetic process via diaminopimelate"/>
    <property type="evidence" value="ECO:0007669"/>
    <property type="project" value="UniProtKB-UniRule"/>
</dbReference>
<dbReference type="FunFam" id="3.10.310.10:FF:000004">
    <property type="entry name" value="Diaminopimelate epimerase"/>
    <property type="match status" value="1"/>
</dbReference>
<dbReference type="Gene3D" id="3.10.310.10">
    <property type="entry name" value="Diaminopimelate Epimerase, Chain A, domain 1"/>
    <property type="match status" value="2"/>
</dbReference>
<dbReference type="HAMAP" id="MF_00197">
    <property type="entry name" value="DAP_epimerase"/>
    <property type="match status" value="1"/>
</dbReference>
<dbReference type="InterPro" id="IPR018510">
    <property type="entry name" value="DAP_epimerase_AS"/>
</dbReference>
<dbReference type="InterPro" id="IPR001653">
    <property type="entry name" value="DAP_epimerase_DapF"/>
</dbReference>
<dbReference type="NCBIfam" id="TIGR00652">
    <property type="entry name" value="DapF"/>
    <property type="match status" value="1"/>
</dbReference>
<dbReference type="PANTHER" id="PTHR31689:SF0">
    <property type="entry name" value="DIAMINOPIMELATE EPIMERASE"/>
    <property type="match status" value="1"/>
</dbReference>
<dbReference type="PANTHER" id="PTHR31689">
    <property type="entry name" value="DIAMINOPIMELATE EPIMERASE, CHLOROPLASTIC"/>
    <property type="match status" value="1"/>
</dbReference>
<dbReference type="Pfam" id="PF01678">
    <property type="entry name" value="DAP_epimerase"/>
    <property type="match status" value="2"/>
</dbReference>
<dbReference type="SUPFAM" id="SSF54506">
    <property type="entry name" value="Diaminopimelate epimerase-like"/>
    <property type="match status" value="1"/>
</dbReference>
<dbReference type="PROSITE" id="PS01326">
    <property type="entry name" value="DAP_EPIMERASE"/>
    <property type="match status" value="1"/>
</dbReference>
<proteinExistence type="inferred from homology"/>
<organism>
    <name type="scientific">Pseudomonas savastanoi pv. phaseolicola (strain 1448A / Race 6)</name>
    <name type="common">Pseudomonas syringae pv. phaseolicola (strain 1448A / Race 6)</name>
    <dbReference type="NCBI Taxonomy" id="264730"/>
    <lineage>
        <taxon>Bacteria</taxon>
        <taxon>Pseudomonadati</taxon>
        <taxon>Pseudomonadota</taxon>
        <taxon>Gammaproteobacteria</taxon>
        <taxon>Pseudomonadales</taxon>
        <taxon>Pseudomonadaceae</taxon>
        <taxon>Pseudomonas</taxon>
    </lineage>
</organism>
<name>DAPF_PSE14</name>
<sequence>MLLRFTKMHGLGNDFMVLDLVSQHAHILPKHAKQWGDRHTGIGFDQLLLVEAPNNPDVDFRYRIFNSDGSEVEQCGNGARCFARFVLDKRLTAKKQIRVETKSGIIELDIRSDGQISVDMGPPRFVPEEIPFEAAEQATRYNVEVDGQNIELAAVSMGNPHAVLRVDDINNAPVHELGPKIEHHPRFPARVNVGFLHVVDRQRAQLRVWERGAGETQACGTGACAAAVAAISQGWMDSPLLIDLPGGRLSIEWAGPGHSVMMTGPAVRVYEGQVRL</sequence>
<protein>
    <recommendedName>
        <fullName evidence="1">Diaminopimelate epimerase</fullName>
        <shortName evidence="1">DAP epimerase</shortName>
        <ecNumber evidence="1">5.1.1.7</ecNumber>
    </recommendedName>
    <alternativeName>
        <fullName evidence="1">PLP-independent amino acid racemase</fullName>
    </alternativeName>
</protein>